<comment type="similarity">
    <text evidence="1">Belongs to the bacterial ribosomal protein bL36 family.</text>
</comment>
<gene>
    <name evidence="1" type="primary">rpmJ</name>
    <name type="ordered locus">Minf_1443</name>
</gene>
<proteinExistence type="inferred from homology"/>
<keyword id="KW-0687">Ribonucleoprotein</keyword>
<keyword id="KW-0689">Ribosomal protein</keyword>
<feature type="chain" id="PRO_1000101041" description="Large ribosomal subunit protein bL36">
    <location>
        <begin position="1"/>
        <end position="38"/>
    </location>
</feature>
<evidence type="ECO:0000255" key="1">
    <source>
        <dbReference type="HAMAP-Rule" id="MF_00251"/>
    </source>
</evidence>
<evidence type="ECO:0000305" key="2"/>
<name>RL36_METI4</name>
<protein>
    <recommendedName>
        <fullName evidence="1">Large ribosomal subunit protein bL36</fullName>
    </recommendedName>
    <alternativeName>
        <fullName evidence="2">50S ribosomal protein L36</fullName>
    </alternativeName>
</protein>
<dbReference type="EMBL" id="CP000975">
    <property type="protein sequence ID" value="ACD83497.1"/>
    <property type="molecule type" value="Genomic_DNA"/>
</dbReference>
<dbReference type="SMR" id="B3DVZ4"/>
<dbReference type="STRING" id="481448.Minf_1443"/>
<dbReference type="KEGG" id="min:Minf_1443"/>
<dbReference type="eggNOG" id="COG0257">
    <property type="taxonomic scope" value="Bacteria"/>
</dbReference>
<dbReference type="HOGENOM" id="CLU_135723_3_3_0"/>
<dbReference type="OrthoDB" id="9802520at2"/>
<dbReference type="Proteomes" id="UP000009149">
    <property type="component" value="Chromosome"/>
</dbReference>
<dbReference type="GO" id="GO:1990904">
    <property type="term" value="C:ribonucleoprotein complex"/>
    <property type="evidence" value="ECO:0007669"/>
    <property type="project" value="UniProtKB-KW"/>
</dbReference>
<dbReference type="GO" id="GO:0005840">
    <property type="term" value="C:ribosome"/>
    <property type="evidence" value="ECO:0007669"/>
    <property type="project" value="UniProtKB-KW"/>
</dbReference>
<dbReference type="GO" id="GO:0003735">
    <property type="term" value="F:structural constituent of ribosome"/>
    <property type="evidence" value="ECO:0007669"/>
    <property type="project" value="InterPro"/>
</dbReference>
<dbReference type="GO" id="GO:0006412">
    <property type="term" value="P:translation"/>
    <property type="evidence" value="ECO:0007669"/>
    <property type="project" value="UniProtKB-UniRule"/>
</dbReference>
<dbReference type="HAMAP" id="MF_00251">
    <property type="entry name" value="Ribosomal_bL36"/>
    <property type="match status" value="1"/>
</dbReference>
<dbReference type="InterPro" id="IPR000473">
    <property type="entry name" value="Ribosomal_bL36"/>
</dbReference>
<dbReference type="InterPro" id="IPR035977">
    <property type="entry name" value="Ribosomal_bL36_sp"/>
</dbReference>
<dbReference type="InterPro" id="IPR047621">
    <property type="entry name" value="Ribosomal_L36_bact"/>
</dbReference>
<dbReference type="NCBIfam" id="NF002021">
    <property type="entry name" value="PRK00831.1"/>
    <property type="match status" value="1"/>
</dbReference>
<dbReference type="NCBIfam" id="TIGR01022">
    <property type="entry name" value="rpmJ_bact"/>
    <property type="match status" value="1"/>
</dbReference>
<dbReference type="PANTHER" id="PTHR47781">
    <property type="entry name" value="50S RIBOSOMAL PROTEIN L36 2"/>
    <property type="match status" value="1"/>
</dbReference>
<dbReference type="PANTHER" id="PTHR47781:SF1">
    <property type="entry name" value="LARGE RIBOSOMAL SUBUNIT PROTEIN BL36B"/>
    <property type="match status" value="1"/>
</dbReference>
<dbReference type="Pfam" id="PF00444">
    <property type="entry name" value="Ribosomal_L36"/>
    <property type="match status" value="1"/>
</dbReference>
<dbReference type="SUPFAM" id="SSF57840">
    <property type="entry name" value="Ribosomal protein L36"/>
    <property type="match status" value="1"/>
</dbReference>
<reference key="1">
    <citation type="journal article" date="2008" name="Biol. Direct">
        <title>Complete genome sequence of the extremely acidophilic methanotroph isolate V4, Methylacidiphilum infernorum, a representative of the bacterial phylum Verrucomicrobia.</title>
        <authorList>
            <person name="Hou S."/>
            <person name="Makarova K.S."/>
            <person name="Saw J.H."/>
            <person name="Senin P."/>
            <person name="Ly B.V."/>
            <person name="Zhou Z."/>
            <person name="Ren Y."/>
            <person name="Wang J."/>
            <person name="Galperin M.Y."/>
            <person name="Omelchenko M.V."/>
            <person name="Wolf Y.I."/>
            <person name="Yutin N."/>
            <person name="Koonin E.V."/>
            <person name="Stott M.B."/>
            <person name="Mountain B.W."/>
            <person name="Crowe M.A."/>
            <person name="Smirnova A.V."/>
            <person name="Dunfield P.F."/>
            <person name="Feng L."/>
            <person name="Wang L."/>
            <person name="Alam M."/>
        </authorList>
    </citation>
    <scope>NUCLEOTIDE SEQUENCE [LARGE SCALE GENOMIC DNA]</scope>
    <source>
        <strain>Isolate V4</strain>
    </source>
</reference>
<sequence length="38" mass="4580">MKVRASVRRRTADCQVVRRKGRIYIINKKNPRLKQRQG</sequence>
<organism>
    <name type="scientific">Methylacidiphilum infernorum (isolate V4)</name>
    <name type="common">Methylokorus infernorum (strain V4)</name>
    <dbReference type="NCBI Taxonomy" id="481448"/>
    <lineage>
        <taxon>Bacteria</taxon>
        <taxon>Pseudomonadati</taxon>
        <taxon>Verrucomicrobiota</taxon>
        <taxon>Methylacidiphilae</taxon>
        <taxon>Methylacidiphilales</taxon>
        <taxon>Methylacidiphilaceae</taxon>
        <taxon>Methylacidiphilum (ex Ratnadevi et al. 2023)</taxon>
    </lineage>
</organism>
<accession>B3DVZ4</accession>